<keyword id="KW-1185">Reference proteome</keyword>
<keyword id="KW-0687">Ribonucleoprotein</keyword>
<keyword id="KW-0689">Ribosomal protein</keyword>
<reference key="1">
    <citation type="submission" date="2008-04" db="EMBL/GenBank/DDBJ databases">
        <title>Complete sequence of chromosome of Exiguobacterium sibiricum 255-15.</title>
        <authorList>
            <consortium name="US DOE Joint Genome Institute"/>
            <person name="Copeland A."/>
            <person name="Lucas S."/>
            <person name="Lapidus A."/>
            <person name="Glavina del Rio T."/>
            <person name="Dalin E."/>
            <person name="Tice H."/>
            <person name="Bruce D."/>
            <person name="Goodwin L."/>
            <person name="Pitluck S."/>
            <person name="Kiss H."/>
            <person name="Chertkov O."/>
            <person name="Monk C."/>
            <person name="Brettin T."/>
            <person name="Detter J.C."/>
            <person name="Han C."/>
            <person name="Kuske C.R."/>
            <person name="Schmutz J."/>
            <person name="Larimer F."/>
            <person name="Land M."/>
            <person name="Hauser L."/>
            <person name="Kyrpides N."/>
            <person name="Mikhailova N."/>
            <person name="Vishnivetskaya T."/>
            <person name="Rodrigues D.F."/>
            <person name="Gilichinsky D."/>
            <person name="Tiedje J."/>
            <person name="Richardson P."/>
        </authorList>
    </citation>
    <scope>NUCLEOTIDE SEQUENCE [LARGE SCALE GENOMIC DNA]</scope>
    <source>
        <strain>DSM 17290 / CCUG 55495 / CIP 109462 / JCM 13490 / 255-15</strain>
    </source>
</reference>
<organism>
    <name type="scientific">Exiguobacterium sibiricum (strain DSM 17290 / CCUG 55495 / CIP 109462 / JCM 13490 / 255-15)</name>
    <dbReference type="NCBI Taxonomy" id="262543"/>
    <lineage>
        <taxon>Bacteria</taxon>
        <taxon>Bacillati</taxon>
        <taxon>Bacillota</taxon>
        <taxon>Bacilli</taxon>
        <taxon>Bacillales</taxon>
        <taxon>Bacillales Family XII. Incertae Sedis</taxon>
        <taxon>Exiguobacterium</taxon>
    </lineage>
</organism>
<name>RS9_EXIS2</name>
<proteinExistence type="inferred from homology"/>
<gene>
    <name evidence="1" type="primary">rpsI</name>
    <name type="ordered locus">Exig_0130</name>
</gene>
<evidence type="ECO:0000255" key="1">
    <source>
        <dbReference type="HAMAP-Rule" id="MF_00532"/>
    </source>
</evidence>
<evidence type="ECO:0000305" key="2"/>
<comment type="similarity">
    <text evidence="1">Belongs to the universal ribosomal protein uS9 family.</text>
</comment>
<dbReference type="EMBL" id="CP001022">
    <property type="protein sequence ID" value="ACB59617.1"/>
    <property type="molecule type" value="Genomic_DNA"/>
</dbReference>
<dbReference type="RefSeq" id="WP_012369042.1">
    <property type="nucleotide sequence ID" value="NC_010556.1"/>
</dbReference>
<dbReference type="SMR" id="B1YH85"/>
<dbReference type="STRING" id="262543.Exig_0130"/>
<dbReference type="KEGG" id="esi:Exig_0130"/>
<dbReference type="eggNOG" id="COG0103">
    <property type="taxonomic scope" value="Bacteria"/>
</dbReference>
<dbReference type="HOGENOM" id="CLU_046483_2_1_9"/>
<dbReference type="OrthoDB" id="9803965at2"/>
<dbReference type="Proteomes" id="UP000001681">
    <property type="component" value="Chromosome"/>
</dbReference>
<dbReference type="GO" id="GO:0022627">
    <property type="term" value="C:cytosolic small ribosomal subunit"/>
    <property type="evidence" value="ECO:0007669"/>
    <property type="project" value="TreeGrafter"/>
</dbReference>
<dbReference type="GO" id="GO:0003723">
    <property type="term" value="F:RNA binding"/>
    <property type="evidence" value="ECO:0007669"/>
    <property type="project" value="TreeGrafter"/>
</dbReference>
<dbReference type="GO" id="GO:0003735">
    <property type="term" value="F:structural constituent of ribosome"/>
    <property type="evidence" value="ECO:0007669"/>
    <property type="project" value="InterPro"/>
</dbReference>
<dbReference type="GO" id="GO:0006412">
    <property type="term" value="P:translation"/>
    <property type="evidence" value="ECO:0007669"/>
    <property type="project" value="UniProtKB-UniRule"/>
</dbReference>
<dbReference type="FunFam" id="3.30.230.10:FF:000001">
    <property type="entry name" value="30S ribosomal protein S9"/>
    <property type="match status" value="1"/>
</dbReference>
<dbReference type="Gene3D" id="3.30.230.10">
    <property type="match status" value="1"/>
</dbReference>
<dbReference type="HAMAP" id="MF_00532_B">
    <property type="entry name" value="Ribosomal_uS9_B"/>
    <property type="match status" value="1"/>
</dbReference>
<dbReference type="InterPro" id="IPR020568">
    <property type="entry name" value="Ribosomal_Su5_D2-typ_SF"/>
</dbReference>
<dbReference type="InterPro" id="IPR000754">
    <property type="entry name" value="Ribosomal_uS9"/>
</dbReference>
<dbReference type="InterPro" id="IPR023035">
    <property type="entry name" value="Ribosomal_uS9_bac/plastid"/>
</dbReference>
<dbReference type="InterPro" id="IPR020574">
    <property type="entry name" value="Ribosomal_uS9_CS"/>
</dbReference>
<dbReference type="InterPro" id="IPR014721">
    <property type="entry name" value="Ribsml_uS5_D2-typ_fold_subgr"/>
</dbReference>
<dbReference type="NCBIfam" id="NF001099">
    <property type="entry name" value="PRK00132.1"/>
    <property type="match status" value="1"/>
</dbReference>
<dbReference type="PANTHER" id="PTHR21569">
    <property type="entry name" value="RIBOSOMAL PROTEIN S9"/>
    <property type="match status" value="1"/>
</dbReference>
<dbReference type="PANTHER" id="PTHR21569:SF1">
    <property type="entry name" value="SMALL RIBOSOMAL SUBUNIT PROTEIN US9M"/>
    <property type="match status" value="1"/>
</dbReference>
<dbReference type="Pfam" id="PF00380">
    <property type="entry name" value="Ribosomal_S9"/>
    <property type="match status" value="1"/>
</dbReference>
<dbReference type="SUPFAM" id="SSF54211">
    <property type="entry name" value="Ribosomal protein S5 domain 2-like"/>
    <property type="match status" value="1"/>
</dbReference>
<dbReference type="PROSITE" id="PS00360">
    <property type="entry name" value="RIBOSOMAL_S9"/>
    <property type="match status" value="1"/>
</dbReference>
<sequence>MADVRYYGTGRRKHAAARVFLVAGDGKVTVNGRDISEYFGYETLIMTAKEPLVLTETEGKYDIMVTVKGGGFTGQAGAIRHGISRALLQADPDFRGTLKAKGFLTRDARMKERKKYGLKAARRAPQFSKR</sequence>
<feature type="chain" id="PRO_1000128126" description="Small ribosomal subunit protein uS9">
    <location>
        <begin position="1"/>
        <end position="130"/>
    </location>
</feature>
<accession>B1YH85</accession>
<protein>
    <recommendedName>
        <fullName evidence="1">Small ribosomal subunit protein uS9</fullName>
    </recommendedName>
    <alternativeName>
        <fullName evidence="2">30S ribosomal protein S9</fullName>
    </alternativeName>
</protein>